<protein>
    <recommendedName>
        <fullName evidence="1">Large ribosomal subunit protein bL32</fullName>
    </recommendedName>
    <alternativeName>
        <fullName evidence="2">50S ribosomal protein L32</fullName>
    </alternativeName>
</protein>
<name>RL32_RUMCH</name>
<comment type="similarity">
    <text evidence="1">Belongs to the bacterial ribosomal protein bL32 family.</text>
</comment>
<reference key="1">
    <citation type="submission" date="2009-01" db="EMBL/GenBank/DDBJ databases">
        <title>Complete sequence of Clostridium cellulolyticum H10.</title>
        <authorList>
            <consortium name="US DOE Joint Genome Institute"/>
            <person name="Lucas S."/>
            <person name="Copeland A."/>
            <person name="Lapidus A."/>
            <person name="Glavina del Rio T."/>
            <person name="Dalin E."/>
            <person name="Tice H."/>
            <person name="Bruce D."/>
            <person name="Goodwin L."/>
            <person name="Pitluck S."/>
            <person name="Chertkov O."/>
            <person name="Saunders E."/>
            <person name="Brettin T."/>
            <person name="Detter J.C."/>
            <person name="Han C."/>
            <person name="Larimer F."/>
            <person name="Land M."/>
            <person name="Hauser L."/>
            <person name="Kyrpides N."/>
            <person name="Ivanova N."/>
            <person name="Zhou J."/>
            <person name="Richardson P."/>
        </authorList>
    </citation>
    <scope>NUCLEOTIDE SEQUENCE [LARGE SCALE GENOMIC DNA]</scope>
    <source>
        <strain>ATCC 35319 / DSM 5812 / JCM 6584 / H10</strain>
    </source>
</reference>
<gene>
    <name evidence="1" type="primary">rpmF</name>
    <name type="ordered locus">Ccel_2134</name>
</gene>
<accession>B8I445</accession>
<organism>
    <name type="scientific">Ruminiclostridium cellulolyticum (strain ATCC 35319 / DSM 5812 / JCM 6584 / H10)</name>
    <name type="common">Clostridium cellulolyticum</name>
    <dbReference type="NCBI Taxonomy" id="394503"/>
    <lineage>
        <taxon>Bacteria</taxon>
        <taxon>Bacillati</taxon>
        <taxon>Bacillota</taxon>
        <taxon>Clostridia</taxon>
        <taxon>Eubacteriales</taxon>
        <taxon>Oscillospiraceae</taxon>
        <taxon>Ruminiclostridium</taxon>
    </lineage>
</organism>
<feature type="chain" id="PRO_1000195968" description="Large ribosomal subunit protein bL32">
    <location>
        <begin position="1"/>
        <end position="60"/>
    </location>
</feature>
<keyword id="KW-1185">Reference proteome</keyword>
<keyword id="KW-0687">Ribonucleoprotein</keyword>
<keyword id="KW-0689">Ribosomal protein</keyword>
<proteinExistence type="inferred from homology"/>
<dbReference type="EMBL" id="CP001348">
    <property type="protein sequence ID" value="ACL76478.1"/>
    <property type="molecule type" value="Genomic_DNA"/>
</dbReference>
<dbReference type="RefSeq" id="WP_004622625.1">
    <property type="nucleotide sequence ID" value="NC_011898.1"/>
</dbReference>
<dbReference type="SMR" id="B8I445"/>
<dbReference type="STRING" id="394503.Ccel_2134"/>
<dbReference type="KEGG" id="cce:Ccel_2134"/>
<dbReference type="eggNOG" id="COG0333">
    <property type="taxonomic scope" value="Bacteria"/>
</dbReference>
<dbReference type="HOGENOM" id="CLU_129084_1_3_9"/>
<dbReference type="OrthoDB" id="9812874at2"/>
<dbReference type="Proteomes" id="UP000001349">
    <property type="component" value="Chromosome"/>
</dbReference>
<dbReference type="GO" id="GO:0015934">
    <property type="term" value="C:large ribosomal subunit"/>
    <property type="evidence" value="ECO:0007669"/>
    <property type="project" value="InterPro"/>
</dbReference>
<dbReference type="GO" id="GO:0003735">
    <property type="term" value="F:structural constituent of ribosome"/>
    <property type="evidence" value="ECO:0007669"/>
    <property type="project" value="InterPro"/>
</dbReference>
<dbReference type="GO" id="GO:0006412">
    <property type="term" value="P:translation"/>
    <property type="evidence" value="ECO:0007669"/>
    <property type="project" value="UniProtKB-UniRule"/>
</dbReference>
<dbReference type="HAMAP" id="MF_00340">
    <property type="entry name" value="Ribosomal_bL32"/>
    <property type="match status" value="1"/>
</dbReference>
<dbReference type="InterPro" id="IPR002677">
    <property type="entry name" value="Ribosomal_bL32"/>
</dbReference>
<dbReference type="InterPro" id="IPR044957">
    <property type="entry name" value="Ribosomal_bL32_bact"/>
</dbReference>
<dbReference type="InterPro" id="IPR011332">
    <property type="entry name" value="Ribosomal_zn-bd"/>
</dbReference>
<dbReference type="NCBIfam" id="TIGR01031">
    <property type="entry name" value="rpmF_bact"/>
    <property type="match status" value="1"/>
</dbReference>
<dbReference type="PANTHER" id="PTHR35534">
    <property type="entry name" value="50S RIBOSOMAL PROTEIN L32"/>
    <property type="match status" value="1"/>
</dbReference>
<dbReference type="PANTHER" id="PTHR35534:SF1">
    <property type="entry name" value="LARGE RIBOSOMAL SUBUNIT PROTEIN BL32"/>
    <property type="match status" value="1"/>
</dbReference>
<dbReference type="Pfam" id="PF01783">
    <property type="entry name" value="Ribosomal_L32p"/>
    <property type="match status" value="1"/>
</dbReference>
<dbReference type="SUPFAM" id="SSF57829">
    <property type="entry name" value="Zn-binding ribosomal proteins"/>
    <property type="match status" value="1"/>
</dbReference>
<evidence type="ECO:0000255" key="1">
    <source>
        <dbReference type="HAMAP-Rule" id="MF_00340"/>
    </source>
</evidence>
<evidence type="ECO:0000305" key="2"/>
<sequence length="60" mass="6902">MANPKRRWSKARTGKRRSQWKLASPTLVSCPQCHVFKLPHRVCGECGYYDGKQVVKVEAK</sequence>